<accession>A5UY52</accession>
<sequence>MLKRRIIPCLDVKAGRVVKGVAFLNHRDAGDPVELAAAYDAGGADELVFYDITASSDERAIMVDVVERTAAQVFIPLTVGGGLRTVEDMYRMLRAGADKVSINTAAVLNPQLIEDGARRFGSQCIVLSIDARRVNASDEPPRWQVFTHTGRDPRPTGLDAIEWARRGVELGAGEIVINSMDEDGVGGGYDIDLLRAITEAVNVPVIASGGVGSPEHMYAGLVEGRADAVLAASIFHFGAYTIRDVKQYLAERGVPVRL</sequence>
<proteinExistence type="inferred from homology"/>
<gene>
    <name evidence="1" type="primary">hisF</name>
    <name type="ordered locus">RoseRS_3194</name>
</gene>
<evidence type="ECO:0000255" key="1">
    <source>
        <dbReference type="HAMAP-Rule" id="MF_01013"/>
    </source>
</evidence>
<comment type="function">
    <text evidence="1">IGPS catalyzes the conversion of PRFAR and glutamine to IGP, AICAR and glutamate. The HisF subunit catalyzes the cyclization activity that produces IGP and AICAR from PRFAR using the ammonia provided by the HisH subunit.</text>
</comment>
<comment type="catalytic activity">
    <reaction evidence="1">
        <text>5-[(5-phospho-1-deoxy-D-ribulos-1-ylimino)methylamino]-1-(5-phospho-beta-D-ribosyl)imidazole-4-carboxamide + L-glutamine = D-erythro-1-(imidazol-4-yl)glycerol 3-phosphate + 5-amino-1-(5-phospho-beta-D-ribosyl)imidazole-4-carboxamide + L-glutamate + H(+)</text>
        <dbReference type="Rhea" id="RHEA:24793"/>
        <dbReference type="ChEBI" id="CHEBI:15378"/>
        <dbReference type="ChEBI" id="CHEBI:29985"/>
        <dbReference type="ChEBI" id="CHEBI:58278"/>
        <dbReference type="ChEBI" id="CHEBI:58359"/>
        <dbReference type="ChEBI" id="CHEBI:58475"/>
        <dbReference type="ChEBI" id="CHEBI:58525"/>
        <dbReference type="EC" id="4.3.2.10"/>
    </reaction>
</comment>
<comment type="pathway">
    <text evidence="1">Amino-acid biosynthesis; L-histidine biosynthesis; L-histidine from 5-phospho-alpha-D-ribose 1-diphosphate: step 5/9.</text>
</comment>
<comment type="subunit">
    <text evidence="1">Heterodimer of HisH and HisF.</text>
</comment>
<comment type="subcellular location">
    <subcellularLocation>
        <location evidence="1">Cytoplasm</location>
    </subcellularLocation>
</comment>
<comment type="similarity">
    <text evidence="1">Belongs to the HisA/HisF family.</text>
</comment>
<name>HIS6_ROSS1</name>
<dbReference type="EC" id="4.3.2.10" evidence="1"/>
<dbReference type="EMBL" id="CP000686">
    <property type="protein sequence ID" value="ABQ91555.1"/>
    <property type="molecule type" value="Genomic_DNA"/>
</dbReference>
<dbReference type="RefSeq" id="WP_011957899.1">
    <property type="nucleotide sequence ID" value="NC_009523.1"/>
</dbReference>
<dbReference type="SMR" id="A5UY52"/>
<dbReference type="STRING" id="357808.RoseRS_3194"/>
<dbReference type="KEGG" id="rrs:RoseRS_3194"/>
<dbReference type="eggNOG" id="COG0107">
    <property type="taxonomic scope" value="Bacteria"/>
</dbReference>
<dbReference type="HOGENOM" id="CLU_048577_4_0_0"/>
<dbReference type="OrthoDB" id="9781903at2"/>
<dbReference type="UniPathway" id="UPA00031">
    <property type="reaction ID" value="UER00010"/>
</dbReference>
<dbReference type="Proteomes" id="UP000006554">
    <property type="component" value="Chromosome"/>
</dbReference>
<dbReference type="GO" id="GO:0005737">
    <property type="term" value="C:cytoplasm"/>
    <property type="evidence" value="ECO:0007669"/>
    <property type="project" value="UniProtKB-SubCell"/>
</dbReference>
<dbReference type="GO" id="GO:0000107">
    <property type="term" value="F:imidazoleglycerol-phosphate synthase activity"/>
    <property type="evidence" value="ECO:0007669"/>
    <property type="project" value="UniProtKB-UniRule"/>
</dbReference>
<dbReference type="GO" id="GO:0016829">
    <property type="term" value="F:lyase activity"/>
    <property type="evidence" value="ECO:0007669"/>
    <property type="project" value="UniProtKB-KW"/>
</dbReference>
<dbReference type="GO" id="GO:0000105">
    <property type="term" value="P:L-histidine biosynthetic process"/>
    <property type="evidence" value="ECO:0007669"/>
    <property type="project" value="UniProtKB-UniRule"/>
</dbReference>
<dbReference type="CDD" id="cd04731">
    <property type="entry name" value="HisF"/>
    <property type="match status" value="1"/>
</dbReference>
<dbReference type="FunFam" id="3.20.20.70:FF:000006">
    <property type="entry name" value="Imidazole glycerol phosphate synthase subunit HisF"/>
    <property type="match status" value="1"/>
</dbReference>
<dbReference type="Gene3D" id="3.20.20.70">
    <property type="entry name" value="Aldolase class I"/>
    <property type="match status" value="1"/>
</dbReference>
<dbReference type="HAMAP" id="MF_01013">
    <property type="entry name" value="HisF"/>
    <property type="match status" value="1"/>
</dbReference>
<dbReference type="InterPro" id="IPR013785">
    <property type="entry name" value="Aldolase_TIM"/>
</dbReference>
<dbReference type="InterPro" id="IPR006062">
    <property type="entry name" value="His_biosynth"/>
</dbReference>
<dbReference type="InterPro" id="IPR004651">
    <property type="entry name" value="HisF"/>
</dbReference>
<dbReference type="InterPro" id="IPR050064">
    <property type="entry name" value="IGPS_HisA/HisF"/>
</dbReference>
<dbReference type="InterPro" id="IPR011060">
    <property type="entry name" value="RibuloseP-bd_barrel"/>
</dbReference>
<dbReference type="NCBIfam" id="TIGR00735">
    <property type="entry name" value="hisF"/>
    <property type="match status" value="1"/>
</dbReference>
<dbReference type="PANTHER" id="PTHR21235:SF2">
    <property type="entry name" value="IMIDAZOLE GLYCEROL PHOSPHATE SYNTHASE HISHF"/>
    <property type="match status" value="1"/>
</dbReference>
<dbReference type="PANTHER" id="PTHR21235">
    <property type="entry name" value="IMIDAZOLE GLYCEROL PHOSPHATE SYNTHASE SUBUNIT HISF/H IGP SYNTHASE SUBUNIT HISF/H"/>
    <property type="match status" value="1"/>
</dbReference>
<dbReference type="Pfam" id="PF00977">
    <property type="entry name" value="His_biosynth"/>
    <property type="match status" value="1"/>
</dbReference>
<dbReference type="SUPFAM" id="SSF51366">
    <property type="entry name" value="Ribulose-phoshate binding barrel"/>
    <property type="match status" value="1"/>
</dbReference>
<feature type="chain" id="PRO_1000063136" description="Imidazole glycerol phosphate synthase subunit HisF">
    <location>
        <begin position="1"/>
        <end position="258"/>
    </location>
</feature>
<feature type="active site" evidence="1">
    <location>
        <position position="11"/>
    </location>
</feature>
<feature type="active site" evidence="1">
    <location>
        <position position="130"/>
    </location>
</feature>
<reference key="1">
    <citation type="submission" date="2007-04" db="EMBL/GenBank/DDBJ databases">
        <title>Complete sequence of Roseiflexus sp. RS-1.</title>
        <authorList>
            <consortium name="US DOE Joint Genome Institute"/>
            <person name="Copeland A."/>
            <person name="Lucas S."/>
            <person name="Lapidus A."/>
            <person name="Barry K."/>
            <person name="Detter J.C."/>
            <person name="Glavina del Rio T."/>
            <person name="Hammon N."/>
            <person name="Israni S."/>
            <person name="Dalin E."/>
            <person name="Tice H."/>
            <person name="Pitluck S."/>
            <person name="Chertkov O."/>
            <person name="Brettin T."/>
            <person name="Bruce D."/>
            <person name="Han C."/>
            <person name="Schmutz J."/>
            <person name="Larimer F."/>
            <person name="Land M."/>
            <person name="Hauser L."/>
            <person name="Kyrpides N."/>
            <person name="Mikhailova N."/>
            <person name="Bryant D.A."/>
            <person name="Richardson P."/>
        </authorList>
    </citation>
    <scope>NUCLEOTIDE SEQUENCE [LARGE SCALE GENOMIC DNA]</scope>
    <source>
        <strain>RS-1</strain>
    </source>
</reference>
<keyword id="KW-0028">Amino-acid biosynthesis</keyword>
<keyword id="KW-0963">Cytoplasm</keyword>
<keyword id="KW-0368">Histidine biosynthesis</keyword>
<keyword id="KW-0456">Lyase</keyword>
<organism>
    <name type="scientific">Roseiflexus sp. (strain RS-1)</name>
    <dbReference type="NCBI Taxonomy" id="357808"/>
    <lineage>
        <taxon>Bacteria</taxon>
        <taxon>Bacillati</taxon>
        <taxon>Chloroflexota</taxon>
        <taxon>Chloroflexia</taxon>
        <taxon>Chloroflexales</taxon>
        <taxon>Roseiflexineae</taxon>
        <taxon>Roseiflexaceae</taxon>
        <taxon>Roseiflexus</taxon>
    </lineage>
</organism>
<protein>
    <recommendedName>
        <fullName evidence="1">Imidazole glycerol phosphate synthase subunit HisF</fullName>
        <ecNumber evidence="1">4.3.2.10</ecNumber>
    </recommendedName>
    <alternativeName>
        <fullName evidence="1">IGP synthase cyclase subunit</fullName>
    </alternativeName>
    <alternativeName>
        <fullName evidence="1">IGP synthase subunit HisF</fullName>
    </alternativeName>
    <alternativeName>
        <fullName evidence="1">ImGP synthase subunit HisF</fullName>
        <shortName evidence="1">IGPS subunit HisF</shortName>
    </alternativeName>
</protein>